<reference key="1">
    <citation type="journal article" date="1996" name="Plant Mol. Biol.">
        <title>Nitrogen metabolism in actinorhizal nodules of Alnus glutinosa: expression of glutamine synthetase and acetylornithine transaminase.</title>
        <authorList>
            <person name="Guan C."/>
            <person name="Ribeiro A."/>
            <person name="Akkermans A.D.L."/>
            <person name="Jing Y."/>
            <person name="van Kammen A."/>
            <person name="Bisseling T."/>
            <person name="Pawlowski K."/>
        </authorList>
    </citation>
    <scope>NUCLEOTIDE SEQUENCE [MRNA]</scope>
    <source>
        <tissue>Root nodule</tissue>
    </source>
</reference>
<comment type="catalytic activity">
    <reaction>
        <text>L-glutamate + NH4(+) + ATP = L-glutamine + ADP + phosphate + H(+)</text>
        <dbReference type="Rhea" id="RHEA:16169"/>
        <dbReference type="ChEBI" id="CHEBI:15378"/>
        <dbReference type="ChEBI" id="CHEBI:28938"/>
        <dbReference type="ChEBI" id="CHEBI:29985"/>
        <dbReference type="ChEBI" id="CHEBI:30616"/>
        <dbReference type="ChEBI" id="CHEBI:43474"/>
        <dbReference type="ChEBI" id="CHEBI:58359"/>
        <dbReference type="ChEBI" id="CHEBI:456216"/>
        <dbReference type="EC" id="6.3.1.2"/>
    </reaction>
</comment>
<comment type="subunit">
    <text evidence="1">Homooctamer.</text>
</comment>
<comment type="subcellular location">
    <subcellularLocation>
        <location>Cytoplasm</location>
    </subcellularLocation>
</comment>
<comment type="tissue specificity">
    <text>Found at highest levels in root nodules.</text>
</comment>
<comment type="miscellaneous">
    <text>Irreversibly inhibited by the herbicide L-phosphinothricin (PPT).</text>
</comment>
<comment type="similarity">
    <text evidence="4">Belongs to the glutamine synthetase family.</text>
</comment>
<proteinExistence type="evidence at transcript level"/>
<accession>O04867</accession>
<gene>
    <name type="primary">GLN1</name>
</gene>
<feature type="chain" id="PRO_0000153167" description="Glutamine synthetase">
    <location>
        <begin position="1"/>
        <end position="356"/>
    </location>
</feature>
<feature type="domain" description="GS beta-grasp" evidence="2">
    <location>
        <begin position="19"/>
        <end position="99"/>
    </location>
</feature>
<feature type="domain" description="GS catalytic" evidence="3">
    <location>
        <begin position="106"/>
        <end position="356"/>
    </location>
</feature>
<dbReference type="EC" id="6.3.1.2"/>
<dbReference type="EMBL" id="Y08681">
    <property type="protein sequence ID" value="CAA69937.1"/>
    <property type="molecule type" value="mRNA"/>
</dbReference>
<dbReference type="SMR" id="O04867"/>
<dbReference type="GO" id="GO:0005737">
    <property type="term" value="C:cytoplasm"/>
    <property type="evidence" value="ECO:0007669"/>
    <property type="project" value="UniProtKB-SubCell"/>
</dbReference>
<dbReference type="GO" id="GO:0005524">
    <property type="term" value="F:ATP binding"/>
    <property type="evidence" value="ECO:0007669"/>
    <property type="project" value="UniProtKB-KW"/>
</dbReference>
<dbReference type="GO" id="GO:0004356">
    <property type="term" value="F:glutamine synthetase activity"/>
    <property type="evidence" value="ECO:0007669"/>
    <property type="project" value="UniProtKB-EC"/>
</dbReference>
<dbReference type="GO" id="GO:0006542">
    <property type="term" value="P:glutamine biosynthetic process"/>
    <property type="evidence" value="ECO:0007669"/>
    <property type="project" value="InterPro"/>
</dbReference>
<dbReference type="FunFam" id="3.30.590.10:FF:000004">
    <property type="entry name" value="Glutamine synthetase"/>
    <property type="match status" value="1"/>
</dbReference>
<dbReference type="Gene3D" id="3.10.20.70">
    <property type="entry name" value="Glutamine synthetase, N-terminal domain"/>
    <property type="match status" value="1"/>
</dbReference>
<dbReference type="Gene3D" id="3.30.590.10">
    <property type="entry name" value="Glutamine synthetase/guanido kinase, catalytic domain"/>
    <property type="match status" value="1"/>
</dbReference>
<dbReference type="InterPro" id="IPR008147">
    <property type="entry name" value="Gln_synt_N"/>
</dbReference>
<dbReference type="InterPro" id="IPR036651">
    <property type="entry name" value="Gln_synt_N_sf"/>
</dbReference>
<dbReference type="InterPro" id="IPR014746">
    <property type="entry name" value="Gln_synth/guanido_kin_cat_dom"/>
</dbReference>
<dbReference type="InterPro" id="IPR008146">
    <property type="entry name" value="Gln_synth_cat_dom"/>
</dbReference>
<dbReference type="InterPro" id="IPR027303">
    <property type="entry name" value="Gln_synth_gly_rich_site"/>
</dbReference>
<dbReference type="InterPro" id="IPR027302">
    <property type="entry name" value="Gln_synth_N_conserv_site"/>
</dbReference>
<dbReference type="InterPro" id="IPR050292">
    <property type="entry name" value="Glutamine_Synthetase"/>
</dbReference>
<dbReference type="PANTHER" id="PTHR20852">
    <property type="entry name" value="GLUTAMINE SYNTHETASE"/>
    <property type="match status" value="1"/>
</dbReference>
<dbReference type="PANTHER" id="PTHR20852:SF113">
    <property type="entry name" value="GLUTAMINE SYNTHETASE CYTOSOLIC ISOZYME 1-4"/>
    <property type="match status" value="1"/>
</dbReference>
<dbReference type="Pfam" id="PF00120">
    <property type="entry name" value="Gln-synt_C"/>
    <property type="match status" value="1"/>
</dbReference>
<dbReference type="SMART" id="SM01230">
    <property type="entry name" value="Gln-synt_C"/>
    <property type="match status" value="1"/>
</dbReference>
<dbReference type="SUPFAM" id="SSF54368">
    <property type="entry name" value="Glutamine synthetase, N-terminal domain"/>
    <property type="match status" value="1"/>
</dbReference>
<dbReference type="SUPFAM" id="SSF55931">
    <property type="entry name" value="Glutamine synthetase/guanido kinase"/>
    <property type="match status" value="1"/>
</dbReference>
<dbReference type="PROSITE" id="PS00180">
    <property type="entry name" value="GLNA_1"/>
    <property type="match status" value="1"/>
</dbReference>
<dbReference type="PROSITE" id="PS00181">
    <property type="entry name" value="GLNA_ATP"/>
    <property type="match status" value="1"/>
</dbReference>
<dbReference type="PROSITE" id="PS51986">
    <property type="entry name" value="GS_BETA_GRASP"/>
    <property type="match status" value="1"/>
</dbReference>
<dbReference type="PROSITE" id="PS51987">
    <property type="entry name" value="GS_CATALYTIC"/>
    <property type="match status" value="1"/>
</dbReference>
<organism>
    <name type="scientific">Alnus glutinosa</name>
    <name type="common">European alder</name>
    <name type="synonym">Betula alnus var. glutinosa</name>
    <dbReference type="NCBI Taxonomy" id="3517"/>
    <lineage>
        <taxon>Eukaryota</taxon>
        <taxon>Viridiplantae</taxon>
        <taxon>Streptophyta</taxon>
        <taxon>Embryophyta</taxon>
        <taxon>Tracheophyta</taxon>
        <taxon>Spermatophyta</taxon>
        <taxon>Magnoliopsida</taxon>
        <taxon>eudicotyledons</taxon>
        <taxon>Gunneridae</taxon>
        <taxon>Pentapetalae</taxon>
        <taxon>rosids</taxon>
        <taxon>fabids</taxon>
        <taxon>Fagales</taxon>
        <taxon>Betulaceae</taxon>
        <taxon>Alnus</taxon>
    </lineage>
</organism>
<protein>
    <recommendedName>
        <fullName>Glutamine synthetase</fullName>
        <ecNumber>6.3.1.2</ecNumber>
    </recommendedName>
    <alternativeName>
        <fullName>GS(1)</fullName>
    </alternativeName>
    <alternativeName>
        <fullName>Glutamate--ammonia ligase</fullName>
    </alternativeName>
</protein>
<sequence length="356" mass="39324">MSLLSDLINLNLSDATDKVIAEYIWIGGSGTDLRSKARTLTGPVNHPSKLPKWNYDGSSTGQAPGEDSEVIYILRQFFKDPFRRGNNILVICDTYTPAGEPIPTNKRHGAAKIFSHPEVVAEVPWYGIEQEYTLLQKDVKWPLGWPVGGYPGPQGPYYCGIGADKAWGRDIVDAHYKACLYAGINISGINGEVMPGQWEFQVGPSVGISAGDEVWAARYILERITEIAGVVLSLDPKPIQGDWNGAGAHTNYSTKSMRNNGGYEIIKKAIEKLGLRHKEHIAAYGEGNERRLTGRHETADINTFKWGVANRGASIRVGRDTEKEGKGYFEDRRPASNMDPYVVTSMIAETTLLWKP</sequence>
<keyword id="KW-0067">ATP-binding</keyword>
<keyword id="KW-0963">Cytoplasm</keyword>
<keyword id="KW-0436">Ligase</keyword>
<keyword id="KW-0535">Nitrogen fixation</keyword>
<keyword id="KW-0547">Nucleotide-binding</keyword>
<name>GLNA1_ALNGL</name>
<evidence type="ECO:0000250" key="1"/>
<evidence type="ECO:0000255" key="2">
    <source>
        <dbReference type="PROSITE-ProRule" id="PRU01330"/>
    </source>
</evidence>
<evidence type="ECO:0000255" key="3">
    <source>
        <dbReference type="PROSITE-ProRule" id="PRU01331"/>
    </source>
</evidence>
<evidence type="ECO:0000305" key="4"/>